<organism>
    <name type="scientific">Bacillus cereus (strain 03BB102)</name>
    <dbReference type="NCBI Taxonomy" id="572264"/>
    <lineage>
        <taxon>Bacteria</taxon>
        <taxon>Bacillati</taxon>
        <taxon>Bacillota</taxon>
        <taxon>Bacilli</taxon>
        <taxon>Bacillales</taxon>
        <taxon>Bacillaceae</taxon>
        <taxon>Bacillus</taxon>
        <taxon>Bacillus cereus group</taxon>
    </lineage>
</organism>
<reference key="1">
    <citation type="submission" date="2009-02" db="EMBL/GenBank/DDBJ databases">
        <title>Genome sequence of Bacillus cereus 03BB102.</title>
        <authorList>
            <person name="Dodson R.J."/>
            <person name="Jackson P."/>
            <person name="Munk A.C."/>
            <person name="Brettin T."/>
            <person name="Bruce D."/>
            <person name="Detter C."/>
            <person name="Tapia R."/>
            <person name="Han C."/>
            <person name="Sutton G."/>
            <person name="Sims D."/>
        </authorList>
    </citation>
    <scope>NUCLEOTIDE SEQUENCE [LARGE SCALE GENOMIC DNA]</scope>
    <source>
        <strain>03BB102</strain>
    </source>
</reference>
<sequence>MIETLLQSPSSWTNFFIFFGLAVLLLFAVLGFVTYGILAERKVMGFMQGRIGPNQVGGRFGLLQTVADVLKLLLKEDSIPKAADKPLFILAPVIAFAPAFMVLAVIPFTDKFQFADIGVGLLYYIAVSGITTIGVVTGGWASNNKYSLLGGMRAAAQMISYEIPLVMSVIGIVLLAGSLNLNEIVAAQENVWYIFVQPIGFVVFLIAAVAELNRTPFDLPEAESELVSGYHTEYSGFRWAFFMLSEYVYFFGMASLITVLFLGGWNPVMFLGFIPGAVWFALKFSSVVFLLIWFRVTFPRIRGDQLMEFGWKVLLPIALANIFLTALIKELFF</sequence>
<dbReference type="EC" id="7.1.1.-" evidence="1"/>
<dbReference type="EMBL" id="CP001407">
    <property type="protein sequence ID" value="ACO26406.1"/>
    <property type="molecule type" value="Genomic_DNA"/>
</dbReference>
<dbReference type="RefSeq" id="WP_000573430.1">
    <property type="nucleotide sequence ID" value="NZ_CP009318.1"/>
</dbReference>
<dbReference type="SMR" id="C1F0L9"/>
<dbReference type="GeneID" id="93005827"/>
<dbReference type="KEGG" id="bcx:BCA_5441"/>
<dbReference type="PATRIC" id="fig|572264.18.peg.5363"/>
<dbReference type="Proteomes" id="UP000002210">
    <property type="component" value="Chromosome"/>
</dbReference>
<dbReference type="GO" id="GO:0005886">
    <property type="term" value="C:plasma membrane"/>
    <property type="evidence" value="ECO:0007669"/>
    <property type="project" value="UniProtKB-SubCell"/>
</dbReference>
<dbReference type="GO" id="GO:0003954">
    <property type="term" value="F:NADH dehydrogenase activity"/>
    <property type="evidence" value="ECO:0007669"/>
    <property type="project" value="TreeGrafter"/>
</dbReference>
<dbReference type="GO" id="GO:0016655">
    <property type="term" value="F:oxidoreductase activity, acting on NAD(P)H, quinone or similar compound as acceptor"/>
    <property type="evidence" value="ECO:0007669"/>
    <property type="project" value="UniProtKB-UniRule"/>
</dbReference>
<dbReference type="GO" id="GO:0048038">
    <property type="term" value="F:quinone binding"/>
    <property type="evidence" value="ECO:0007669"/>
    <property type="project" value="UniProtKB-KW"/>
</dbReference>
<dbReference type="GO" id="GO:0009060">
    <property type="term" value="P:aerobic respiration"/>
    <property type="evidence" value="ECO:0007669"/>
    <property type="project" value="TreeGrafter"/>
</dbReference>
<dbReference type="HAMAP" id="MF_01350">
    <property type="entry name" value="NDH1_NuoH"/>
    <property type="match status" value="1"/>
</dbReference>
<dbReference type="InterPro" id="IPR001694">
    <property type="entry name" value="NADH_UbQ_OxRdtase_su1/FPO"/>
</dbReference>
<dbReference type="InterPro" id="IPR018086">
    <property type="entry name" value="NADH_UbQ_OxRdtase_su1_CS"/>
</dbReference>
<dbReference type="NCBIfam" id="NF004741">
    <property type="entry name" value="PRK06076.1-2"/>
    <property type="match status" value="1"/>
</dbReference>
<dbReference type="PANTHER" id="PTHR11432">
    <property type="entry name" value="NADH DEHYDROGENASE SUBUNIT 1"/>
    <property type="match status" value="1"/>
</dbReference>
<dbReference type="PANTHER" id="PTHR11432:SF3">
    <property type="entry name" value="NADH-UBIQUINONE OXIDOREDUCTASE CHAIN 1"/>
    <property type="match status" value="1"/>
</dbReference>
<dbReference type="Pfam" id="PF00146">
    <property type="entry name" value="NADHdh"/>
    <property type="match status" value="1"/>
</dbReference>
<dbReference type="PROSITE" id="PS00668">
    <property type="entry name" value="COMPLEX1_ND1_2"/>
    <property type="match status" value="1"/>
</dbReference>
<name>NUOH_BACC3</name>
<keyword id="KW-1003">Cell membrane</keyword>
<keyword id="KW-0472">Membrane</keyword>
<keyword id="KW-0520">NAD</keyword>
<keyword id="KW-0874">Quinone</keyword>
<keyword id="KW-1278">Translocase</keyword>
<keyword id="KW-0812">Transmembrane</keyword>
<keyword id="KW-1133">Transmembrane helix</keyword>
<keyword id="KW-0830">Ubiquinone</keyword>
<feature type="chain" id="PRO_1000166619" description="NADH-quinone oxidoreductase subunit H">
    <location>
        <begin position="1"/>
        <end position="333"/>
    </location>
</feature>
<feature type="transmembrane region" description="Helical" evidence="1">
    <location>
        <begin position="15"/>
        <end position="35"/>
    </location>
</feature>
<feature type="transmembrane region" description="Helical" evidence="1">
    <location>
        <begin position="88"/>
        <end position="108"/>
    </location>
</feature>
<feature type="transmembrane region" description="Helical" evidence="1">
    <location>
        <begin position="117"/>
        <end position="137"/>
    </location>
</feature>
<feature type="transmembrane region" description="Helical" evidence="1">
    <location>
        <begin position="159"/>
        <end position="179"/>
    </location>
</feature>
<feature type="transmembrane region" description="Helical" evidence="1">
    <location>
        <begin position="191"/>
        <end position="211"/>
    </location>
</feature>
<feature type="transmembrane region" description="Helical" evidence="1">
    <location>
        <begin position="239"/>
        <end position="259"/>
    </location>
</feature>
<feature type="transmembrane region" description="Helical" evidence="1">
    <location>
        <begin position="274"/>
        <end position="296"/>
    </location>
</feature>
<feature type="transmembrane region" description="Helical" evidence="1">
    <location>
        <begin position="313"/>
        <end position="333"/>
    </location>
</feature>
<comment type="function">
    <text evidence="1">NDH-1 shuttles electrons from NADH, via FMN and iron-sulfur (Fe-S) centers, to quinones in the respiratory chain. The immediate electron acceptor for the enzyme in this species is believed to be ubiquinone. Couples the redox reaction to proton translocation (for every two electrons transferred, four hydrogen ions are translocated across the cytoplasmic membrane), and thus conserves the redox energy in a proton gradient. This subunit may bind ubiquinone.</text>
</comment>
<comment type="catalytic activity">
    <reaction evidence="1">
        <text>a quinone + NADH + 5 H(+)(in) = a quinol + NAD(+) + 4 H(+)(out)</text>
        <dbReference type="Rhea" id="RHEA:57888"/>
        <dbReference type="ChEBI" id="CHEBI:15378"/>
        <dbReference type="ChEBI" id="CHEBI:24646"/>
        <dbReference type="ChEBI" id="CHEBI:57540"/>
        <dbReference type="ChEBI" id="CHEBI:57945"/>
        <dbReference type="ChEBI" id="CHEBI:132124"/>
    </reaction>
</comment>
<comment type="subunit">
    <text evidence="1">NDH-1 is composed of 14 different subunits. Subunits NuoA, H, J, K, L, M, N constitute the membrane sector of the complex.</text>
</comment>
<comment type="subcellular location">
    <subcellularLocation>
        <location evidence="1">Cell membrane</location>
        <topology evidence="1">Multi-pass membrane protein</topology>
    </subcellularLocation>
</comment>
<comment type="similarity">
    <text evidence="1">Belongs to the complex I subunit 1 family.</text>
</comment>
<protein>
    <recommendedName>
        <fullName evidence="1">NADH-quinone oxidoreductase subunit H</fullName>
        <ecNumber evidence="1">7.1.1.-</ecNumber>
    </recommendedName>
    <alternativeName>
        <fullName evidence="1">NADH dehydrogenase I subunit H</fullName>
    </alternativeName>
    <alternativeName>
        <fullName evidence="1">NDH-1 subunit H</fullName>
    </alternativeName>
</protein>
<accession>C1F0L9</accession>
<gene>
    <name evidence="1" type="primary">nuoH</name>
    <name type="ordered locus">BCA_5441</name>
</gene>
<evidence type="ECO:0000255" key="1">
    <source>
        <dbReference type="HAMAP-Rule" id="MF_01350"/>
    </source>
</evidence>
<proteinExistence type="inferred from homology"/>